<comment type="function">
    <text evidence="2">Involved in mitochondrial distribution and morphology.</text>
</comment>
<comment type="miscellaneous">
    <text evidence="3">Present with 414 molecules/cell in log phase SD medium.</text>
</comment>
<feature type="chain" id="PRO_0000096332" description="Mitochondrial distribution and morphology protein 36">
    <location>
        <begin position="1"/>
        <end position="579"/>
    </location>
</feature>
<feature type="region of interest" description="Disordered" evidence="1">
    <location>
        <begin position="1"/>
        <end position="27"/>
    </location>
</feature>
<feature type="region of interest" description="Disordered" evidence="1">
    <location>
        <begin position="378"/>
        <end position="401"/>
    </location>
</feature>
<feature type="region of interest" description="Disordered" evidence="1">
    <location>
        <begin position="446"/>
        <end position="518"/>
    </location>
</feature>
<feature type="compositionally biased region" description="Polar residues" evidence="1">
    <location>
        <begin position="379"/>
        <end position="390"/>
    </location>
</feature>
<feature type="compositionally biased region" description="Basic and acidic residues" evidence="1">
    <location>
        <begin position="446"/>
        <end position="463"/>
    </location>
</feature>
<feature type="compositionally biased region" description="Low complexity" evidence="1">
    <location>
        <begin position="495"/>
        <end position="518"/>
    </location>
</feature>
<feature type="modified residue" description="Phosphoserine" evidence="4 5">
    <location>
        <position position="42"/>
    </location>
</feature>
<keyword id="KW-0597">Phosphoprotein</keyword>
<keyword id="KW-1185">Reference proteome</keyword>
<dbReference type="EMBL" id="U51033">
    <property type="protein sequence ID" value="AAB68132.1"/>
    <property type="molecule type" value="Genomic_DNA"/>
</dbReference>
<dbReference type="EMBL" id="BK006949">
    <property type="protein sequence ID" value="DAA11501.1"/>
    <property type="molecule type" value="Genomic_DNA"/>
</dbReference>
<dbReference type="PIR" id="S69069">
    <property type="entry name" value="S69069"/>
</dbReference>
<dbReference type="RefSeq" id="NP_015408.1">
    <property type="nucleotide sequence ID" value="NM_001184180.1"/>
</dbReference>
<dbReference type="SMR" id="Q06820"/>
<dbReference type="BioGRID" id="36254">
    <property type="interactions" value="203"/>
</dbReference>
<dbReference type="ComplexPortal" id="CPX-8559">
    <property type="entry name" value="MECA complex"/>
</dbReference>
<dbReference type="DIP" id="DIP-3890N"/>
<dbReference type="FunCoup" id="Q06820">
    <property type="interactions" value="56"/>
</dbReference>
<dbReference type="IntAct" id="Q06820">
    <property type="interactions" value="1"/>
</dbReference>
<dbReference type="MINT" id="Q06820"/>
<dbReference type="STRING" id="4932.YPR083W"/>
<dbReference type="iPTMnet" id="Q06820"/>
<dbReference type="PaxDb" id="4932-YPR083W"/>
<dbReference type="PeptideAtlas" id="Q06820"/>
<dbReference type="EnsemblFungi" id="YPR083W_mRNA">
    <property type="protein sequence ID" value="YPR083W"/>
    <property type="gene ID" value="YPR083W"/>
</dbReference>
<dbReference type="GeneID" id="856198"/>
<dbReference type="KEGG" id="sce:YPR083W"/>
<dbReference type="AGR" id="SGD:S000006287"/>
<dbReference type="SGD" id="S000006287">
    <property type="gene designation" value="MDM36"/>
</dbReference>
<dbReference type="VEuPathDB" id="FungiDB:YPR083W"/>
<dbReference type="eggNOG" id="ENOG502RNI7">
    <property type="taxonomic scope" value="Eukaryota"/>
</dbReference>
<dbReference type="HOGENOM" id="CLU_039753_0_0_1"/>
<dbReference type="InParanoid" id="Q06820"/>
<dbReference type="OMA" id="AKYECLA"/>
<dbReference type="OrthoDB" id="4021219at2759"/>
<dbReference type="BioCyc" id="YEAST:G3O-34227-MONOMER"/>
<dbReference type="BioGRID-ORCS" id="856198">
    <property type="hits" value="0 hits in 10 CRISPR screens"/>
</dbReference>
<dbReference type="PRO" id="PR:Q06820"/>
<dbReference type="Proteomes" id="UP000002311">
    <property type="component" value="Chromosome XVI"/>
</dbReference>
<dbReference type="RNAct" id="Q06820">
    <property type="molecule type" value="protein"/>
</dbReference>
<dbReference type="GO" id="GO:0005737">
    <property type="term" value="C:cytoplasm"/>
    <property type="evidence" value="ECO:0000314"/>
    <property type="project" value="SGD"/>
</dbReference>
<dbReference type="GO" id="GO:0005739">
    <property type="term" value="C:mitochondrion"/>
    <property type="evidence" value="ECO:0000314"/>
    <property type="project" value="SGD"/>
</dbReference>
<dbReference type="GO" id="GO:0048312">
    <property type="term" value="P:intracellular distribution of mitochondria"/>
    <property type="evidence" value="ECO:0000315"/>
    <property type="project" value="SGD"/>
</dbReference>
<dbReference type="GO" id="GO:0000266">
    <property type="term" value="P:mitochondrial fission"/>
    <property type="evidence" value="ECO:0000315"/>
    <property type="project" value="SGD"/>
</dbReference>
<dbReference type="GO" id="GO:0000001">
    <property type="term" value="P:mitochondrion inheritance"/>
    <property type="evidence" value="ECO:0000315"/>
    <property type="project" value="SGD"/>
</dbReference>
<dbReference type="GO" id="GO:0007005">
    <property type="term" value="P:mitochondrion organization"/>
    <property type="evidence" value="ECO:0000315"/>
    <property type="project" value="SGD"/>
</dbReference>
<proteinExistence type="evidence at protein level"/>
<protein>
    <recommendedName>
        <fullName>Mitochondrial distribution and morphology protein 36</fullName>
    </recommendedName>
</protein>
<name>MDM36_YEAST</name>
<sequence length="579" mass="64958">MDENGTVKPGYELKGLNSGNSRSNMDKDPIVSKFHRAGLNDSADEEDTDINGNRNTSWITSMISEEKRKVEGKSMLNDEEDLHLSKATLNKCDALVKILADIIKLEFVIHQSWYIRSLHKSVLIQFEVETSGGNKNSAGDSGDDDDDNHNGNLDDSFYKDLSLKCIKKCEKSSLALESLSRDIDQIRDFIMSNTIEDNRVDRLLQNSMTLLLECWIYSMKRLRRLRMKIAGIFVRSKLLLIDHELVTIWHFLQEQNEHETVNNENELKLAETIKSYRAFIKIFIQQLEDSESGSPSSSLFEECLHVFLDIESMYNSLNLNWLLNENKALQERLLSPSSTSENDHTNNLPVIDETKEIEDISSFVNSIVDASMLTHDLTPINSSDSDNLSNGEIDRLDGRRLSSSTSDMSLMMQRTSLQKQLPSLLTAFNNARRLEQELQNACKVNDNKHSTKDTDSNIRRNEHAMSSSVSSIISQNSTLASPSPPMSSSFISTAPSQSSSRMSTLPLSPSSSLLESQSQTLKNNMSQWLNQSRSGLNGTKLIPTNHIGFHSNVLNTLYGIGGGPVSKSYKSNQPSSQNT</sequence>
<accession>Q06820</accession>
<accession>D6W485</accession>
<evidence type="ECO:0000256" key="1">
    <source>
        <dbReference type="SAM" id="MobiDB-lite"/>
    </source>
</evidence>
<evidence type="ECO:0000269" key="2">
    <source>
    </source>
</evidence>
<evidence type="ECO:0000269" key="3">
    <source>
    </source>
</evidence>
<evidence type="ECO:0007744" key="4">
    <source>
    </source>
</evidence>
<evidence type="ECO:0007744" key="5">
    <source>
    </source>
</evidence>
<gene>
    <name type="primary">MDM36</name>
    <name type="ordered locus">YPR083W</name>
</gene>
<reference key="1">
    <citation type="journal article" date="1997" name="Nature">
        <title>The nucleotide sequence of Saccharomyces cerevisiae chromosome XVI.</title>
        <authorList>
            <person name="Bussey H."/>
            <person name="Storms R.K."/>
            <person name="Ahmed A."/>
            <person name="Albermann K."/>
            <person name="Allen E."/>
            <person name="Ansorge W."/>
            <person name="Araujo R."/>
            <person name="Aparicio A."/>
            <person name="Barrell B.G."/>
            <person name="Badcock K."/>
            <person name="Benes V."/>
            <person name="Botstein D."/>
            <person name="Bowman S."/>
            <person name="Brueckner M."/>
            <person name="Carpenter J."/>
            <person name="Cherry J.M."/>
            <person name="Chung E."/>
            <person name="Churcher C.M."/>
            <person name="Coster F."/>
            <person name="Davis K."/>
            <person name="Davis R.W."/>
            <person name="Dietrich F.S."/>
            <person name="Delius H."/>
            <person name="DiPaolo T."/>
            <person name="Dubois E."/>
            <person name="Duesterhoeft A."/>
            <person name="Duncan M."/>
            <person name="Floeth M."/>
            <person name="Fortin N."/>
            <person name="Friesen J.D."/>
            <person name="Fritz C."/>
            <person name="Goffeau A."/>
            <person name="Hall J."/>
            <person name="Hebling U."/>
            <person name="Heumann K."/>
            <person name="Hilbert H."/>
            <person name="Hillier L.W."/>
            <person name="Hunicke-Smith S."/>
            <person name="Hyman R.W."/>
            <person name="Johnston M."/>
            <person name="Kalman S."/>
            <person name="Kleine K."/>
            <person name="Komp C."/>
            <person name="Kurdi O."/>
            <person name="Lashkari D."/>
            <person name="Lew H."/>
            <person name="Lin A."/>
            <person name="Lin D."/>
            <person name="Louis E.J."/>
            <person name="Marathe R."/>
            <person name="Messenguy F."/>
            <person name="Mewes H.-W."/>
            <person name="Mirtipati S."/>
            <person name="Moestl D."/>
            <person name="Mueller-Auer S."/>
            <person name="Namath A."/>
            <person name="Nentwich U."/>
            <person name="Oefner P."/>
            <person name="Pearson D."/>
            <person name="Petel F.X."/>
            <person name="Pohl T.M."/>
            <person name="Purnelle B."/>
            <person name="Rajandream M.A."/>
            <person name="Rechmann S."/>
            <person name="Rieger M."/>
            <person name="Riles L."/>
            <person name="Roberts D."/>
            <person name="Schaefer M."/>
            <person name="Scharfe M."/>
            <person name="Scherens B."/>
            <person name="Schramm S."/>
            <person name="Schroeder M."/>
            <person name="Sdicu A.-M."/>
            <person name="Tettelin H."/>
            <person name="Urrestarazu L.A."/>
            <person name="Ushinsky S."/>
            <person name="Vierendeels F."/>
            <person name="Vissers S."/>
            <person name="Voss H."/>
            <person name="Walsh S.V."/>
            <person name="Wambutt R."/>
            <person name="Wang Y."/>
            <person name="Wedler E."/>
            <person name="Wedler H."/>
            <person name="Winnett E."/>
            <person name="Zhong W.-W."/>
            <person name="Zollner A."/>
            <person name="Vo D.H."/>
            <person name="Hani J."/>
        </authorList>
    </citation>
    <scope>NUCLEOTIDE SEQUENCE [LARGE SCALE GENOMIC DNA]</scope>
    <source>
        <strain>ATCC 204508 / S288c</strain>
    </source>
</reference>
<reference key="2">
    <citation type="journal article" date="2014" name="G3 (Bethesda)">
        <title>The reference genome sequence of Saccharomyces cerevisiae: Then and now.</title>
        <authorList>
            <person name="Engel S.R."/>
            <person name="Dietrich F.S."/>
            <person name="Fisk D.G."/>
            <person name="Binkley G."/>
            <person name="Balakrishnan R."/>
            <person name="Costanzo M.C."/>
            <person name="Dwight S.S."/>
            <person name="Hitz B.C."/>
            <person name="Karra K."/>
            <person name="Nash R.S."/>
            <person name="Weng S."/>
            <person name="Wong E.D."/>
            <person name="Lloyd P."/>
            <person name="Skrzypek M.S."/>
            <person name="Miyasato S.R."/>
            <person name="Simison M."/>
            <person name="Cherry J.M."/>
        </authorList>
    </citation>
    <scope>GENOME REANNOTATION</scope>
    <source>
        <strain>ATCC 204508 / S288c</strain>
    </source>
</reference>
<reference key="3">
    <citation type="journal article" date="2002" name="Mol. Biol. Cell">
        <title>Genetic basis of mitochondrial function and morphology in Saccharomyces cerevisiae.</title>
        <authorList>
            <person name="Dimmer K.S."/>
            <person name="Fritz S."/>
            <person name="Fuchs F."/>
            <person name="Messerschmitt M."/>
            <person name="Weinbach N."/>
            <person name="Neupert W."/>
            <person name="Westermann B."/>
        </authorList>
    </citation>
    <scope>FUNCTION</scope>
</reference>
<reference key="4">
    <citation type="journal article" date="2003" name="Nature">
        <title>Global analysis of protein expression in yeast.</title>
        <authorList>
            <person name="Ghaemmaghami S."/>
            <person name="Huh W.-K."/>
            <person name="Bower K."/>
            <person name="Howson R.W."/>
            <person name="Belle A."/>
            <person name="Dephoure N."/>
            <person name="O'Shea E.K."/>
            <person name="Weissman J.S."/>
        </authorList>
    </citation>
    <scope>LEVEL OF PROTEIN EXPRESSION [LARGE SCALE ANALYSIS]</scope>
</reference>
<reference key="5">
    <citation type="journal article" date="2008" name="Mol. Cell. Proteomics">
        <title>A multidimensional chromatography technology for in-depth phosphoproteome analysis.</title>
        <authorList>
            <person name="Albuquerque C.P."/>
            <person name="Smolka M.B."/>
            <person name="Payne S.H."/>
            <person name="Bafna V."/>
            <person name="Eng J."/>
            <person name="Zhou H."/>
        </authorList>
    </citation>
    <scope>PHOSPHORYLATION [LARGE SCALE ANALYSIS] AT SER-42</scope>
    <scope>IDENTIFICATION BY MASS SPECTROMETRY [LARGE SCALE ANALYSIS]</scope>
</reference>
<reference key="6">
    <citation type="journal article" date="2009" name="Science">
        <title>Global analysis of Cdk1 substrate phosphorylation sites provides insights into evolution.</title>
        <authorList>
            <person name="Holt L.J."/>
            <person name="Tuch B.B."/>
            <person name="Villen J."/>
            <person name="Johnson A.D."/>
            <person name="Gygi S.P."/>
            <person name="Morgan D.O."/>
        </authorList>
    </citation>
    <scope>PHOSPHORYLATION [LARGE SCALE ANALYSIS] AT SER-42</scope>
    <scope>IDENTIFICATION BY MASS SPECTROMETRY [LARGE SCALE ANALYSIS]</scope>
</reference>
<organism>
    <name type="scientific">Saccharomyces cerevisiae (strain ATCC 204508 / S288c)</name>
    <name type="common">Baker's yeast</name>
    <dbReference type="NCBI Taxonomy" id="559292"/>
    <lineage>
        <taxon>Eukaryota</taxon>
        <taxon>Fungi</taxon>
        <taxon>Dikarya</taxon>
        <taxon>Ascomycota</taxon>
        <taxon>Saccharomycotina</taxon>
        <taxon>Saccharomycetes</taxon>
        <taxon>Saccharomycetales</taxon>
        <taxon>Saccharomycetaceae</taxon>
        <taxon>Saccharomyces</taxon>
    </lineage>
</organism>